<gene>
    <name type="primary">apcF</name>
    <name type="ordered locus">slr1459</name>
</gene>
<reference key="1">
    <citation type="journal article" date="1996" name="DNA Res.">
        <title>Sequence analysis of the genome of the unicellular cyanobacterium Synechocystis sp. strain PCC6803. II. Sequence determination of the entire genome and assignment of potential protein-coding regions.</title>
        <authorList>
            <person name="Kaneko T."/>
            <person name="Sato S."/>
            <person name="Kotani H."/>
            <person name="Tanaka A."/>
            <person name="Asamizu E."/>
            <person name="Nakamura Y."/>
            <person name="Miyajima N."/>
            <person name="Hirosawa M."/>
            <person name="Sugiura M."/>
            <person name="Sasamoto S."/>
            <person name="Kimura T."/>
            <person name="Hosouchi T."/>
            <person name="Matsuno A."/>
            <person name="Muraki A."/>
            <person name="Nakazaki N."/>
            <person name="Naruo K."/>
            <person name="Okumura S."/>
            <person name="Shimpo S."/>
            <person name="Takeuchi C."/>
            <person name="Wada T."/>
            <person name="Watanabe A."/>
            <person name="Yamada M."/>
            <person name="Yasuda M."/>
            <person name="Tabata S."/>
        </authorList>
    </citation>
    <scope>NUCLEOTIDE SEQUENCE [LARGE SCALE GENOMIC DNA]</scope>
    <source>
        <strain>ATCC 27184 / PCC 6803 / Kazusa</strain>
    </source>
</reference>
<reference key="2">
    <citation type="journal article" date="1999" name="Photosyn. Res.">
        <title>The role of ApcD and ApcF in energy transfer from phycobilisomes to PS I and PS II in a cyanobacterium.</title>
        <authorList>
            <person name="Ashby M.K."/>
            <person name="Mullineaux C.W."/>
        </authorList>
    </citation>
    <scope>FUNCTION</scope>
    <scope>DISRUPTION PHENOTYPE</scope>
    <source>
        <strain>ATCC 27184 / PCC 6803 / N-1</strain>
    </source>
</reference>
<dbReference type="EMBL" id="BA000022">
    <property type="protein sequence ID" value="BAA18658.1"/>
    <property type="molecule type" value="Genomic_DNA"/>
</dbReference>
<dbReference type="PIR" id="S76746">
    <property type="entry name" value="S76746"/>
</dbReference>
<dbReference type="PDB" id="7SC7">
    <property type="method" value="EM"/>
    <property type="resolution" value="2.80 A"/>
    <property type="chains" value="AK/BR=1-169"/>
</dbReference>
<dbReference type="PDB" id="7SC9">
    <property type="method" value="EM"/>
    <property type="resolution" value="2.60 A"/>
    <property type="chains" value="AK/BS=1-169"/>
</dbReference>
<dbReference type="PDB" id="7SCB">
    <property type="method" value="EM"/>
    <property type="resolution" value="2.50 A"/>
    <property type="chains" value="AK=1-169"/>
</dbReference>
<dbReference type="PDB" id="8TO2">
    <property type="method" value="EM"/>
    <property type="resolution" value="2.00 A"/>
    <property type="chains" value="o=1-169"/>
</dbReference>
<dbReference type="PDBsum" id="7SC7"/>
<dbReference type="PDBsum" id="7SC9"/>
<dbReference type="PDBsum" id="7SCB"/>
<dbReference type="PDBsum" id="8TO2"/>
<dbReference type="EMDB" id="EMD-25028"/>
<dbReference type="EMDB" id="EMD-25030"/>
<dbReference type="EMDB" id="EMD-25032"/>
<dbReference type="EMDB" id="EMD-41434"/>
<dbReference type="SMR" id="P74551"/>
<dbReference type="STRING" id="1148.gene:10500424"/>
<dbReference type="PaxDb" id="1148-1653747"/>
<dbReference type="EnsemblBacteria" id="BAA18658">
    <property type="protein sequence ID" value="BAA18658"/>
    <property type="gene ID" value="BAA18658"/>
</dbReference>
<dbReference type="KEGG" id="syn:slr1459"/>
<dbReference type="eggNOG" id="ENOG502Z8IM">
    <property type="taxonomic scope" value="Bacteria"/>
</dbReference>
<dbReference type="InParanoid" id="P74551"/>
<dbReference type="PhylomeDB" id="P74551"/>
<dbReference type="Proteomes" id="UP000001425">
    <property type="component" value="Chromosome"/>
</dbReference>
<dbReference type="GO" id="GO:0030089">
    <property type="term" value="C:phycobilisome"/>
    <property type="evidence" value="ECO:0000318"/>
    <property type="project" value="GO_Central"/>
</dbReference>
<dbReference type="GO" id="GO:0031676">
    <property type="term" value="C:plasma membrane-derived thylakoid membrane"/>
    <property type="evidence" value="ECO:0007669"/>
    <property type="project" value="UniProtKB-SubCell"/>
</dbReference>
<dbReference type="GO" id="GO:0015979">
    <property type="term" value="P:photosynthesis"/>
    <property type="evidence" value="ECO:0007669"/>
    <property type="project" value="UniProtKB-KW"/>
</dbReference>
<dbReference type="Gene3D" id="1.10.490.20">
    <property type="entry name" value="Phycocyanins"/>
    <property type="match status" value="1"/>
</dbReference>
<dbReference type="InterPro" id="IPR006245">
    <property type="entry name" value="Allophycocyanin_b"/>
</dbReference>
<dbReference type="InterPro" id="IPR009050">
    <property type="entry name" value="Globin-like_sf"/>
</dbReference>
<dbReference type="InterPro" id="IPR012128">
    <property type="entry name" value="Phycobilisome_asu/bsu"/>
</dbReference>
<dbReference type="InterPro" id="IPR038719">
    <property type="entry name" value="Phycobilisome_asu/bsu_sf"/>
</dbReference>
<dbReference type="NCBIfam" id="TIGR01337">
    <property type="entry name" value="apcB"/>
    <property type="match status" value="1"/>
</dbReference>
<dbReference type="PANTHER" id="PTHR34011:SF3">
    <property type="entry name" value="ALLOPHYCOCYANIN BETA CHAIN"/>
    <property type="match status" value="1"/>
</dbReference>
<dbReference type="PANTHER" id="PTHR34011">
    <property type="entry name" value="PHYCOBILISOME 32.1 KDA LINKER POLYPEPTIDE, PHYCOCYANIN-ASSOCIATED, ROD 2-RELATED"/>
    <property type="match status" value="1"/>
</dbReference>
<dbReference type="Pfam" id="PF00502">
    <property type="entry name" value="Phycobilisome"/>
    <property type="match status" value="1"/>
</dbReference>
<dbReference type="PIRSF" id="PIRSF000081">
    <property type="entry name" value="Phycocyanin"/>
    <property type="match status" value="1"/>
</dbReference>
<dbReference type="SUPFAM" id="SSF46458">
    <property type="entry name" value="Globin-like"/>
    <property type="match status" value="1"/>
</dbReference>
<accession>P74551</accession>
<feature type="chain" id="PRO_0000403180" description="Allophycocyanin subunit beta-18">
    <location>
        <begin position="1"/>
        <end position="169"/>
    </location>
</feature>
<feature type="binding site" description="covalent" evidence="3">
    <location>
        <position position="82"/>
    </location>
    <ligand>
        <name>(2R,3E)-phycocyanobilin</name>
        <dbReference type="ChEBI" id="CHEBI:85275"/>
    </ligand>
</feature>
<feature type="modified residue" description="N4-methylasparagine" evidence="1">
    <location>
        <position position="72"/>
    </location>
</feature>
<feature type="helix" evidence="4">
    <location>
        <begin position="4"/>
        <end position="14"/>
    </location>
</feature>
<feature type="helix" evidence="4">
    <location>
        <begin position="21"/>
        <end position="62"/>
    </location>
</feature>
<feature type="helix" evidence="4">
    <location>
        <begin position="64"/>
        <end position="67"/>
    </location>
</feature>
<feature type="helix" evidence="4">
    <location>
        <begin position="75"/>
        <end position="99"/>
    </location>
</feature>
<feature type="helix" evidence="4">
    <location>
        <begin position="103"/>
        <end position="108"/>
    </location>
</feature>
<feature type="turn" evidence="4">
    <location>
        <begin position="109"/>
        <end position="112"/>
    </location>
</feature>
<feature type="helix" evidence="4">
    <location>
        <begin position="113"/>
        <end position="120"/>
    </location>
</feature>
<feature type="helix" evidence="4">
    <location>
        <begin position="124"/>
        <end position="144"/>
    </location>
</feature>
<feature type="helix" evidence="4">
    <location>
        <begin position="154"/>
        <end position="164"/>
    </location>
</feature>
<keyword id="KW-0002">3D-structure</keyword>
<keyword id="KW-0042">Antenna complex</keyword>
<keyword id="KW-0089">Bile pigment</keyword>
<keyword id="KW-0157">Chromophore</keyword>
<keyword id="KW-0249">Electron transport</keyword>
<keyword id="KW-0472">Membrane</keyword>
<keyword id="KW-0488">Methylation</keyword>
<keyword id="KW-0602">Photosynthesis</keyword>
<keyword id="KW-0605">Phycobilisome</keyword>
<keyword id="KW-1185">Reference proteome</keyword>
<keyword id="KW-0793">Thylakoid</keyword>
<keyword id="KW-0813">Transport</keyword>
<evidence type="ECO:0000250" key="1"/>
<evidence type="ECO:0000269" key="2">
    <source ref="2"/>
</evidence>
<evidence type="ECO:0000305" key="3"/>
<evidence type="ECO:0007829" key="4">
    <source>
        <dbReference type="PDB" id="8TO2"/>
    </source>
</evidence>
<sequence>MRDAVTTLIKNYDLTGRYLDRNAMDELKAYFESGSARIAAAAMINANSATIVKRAAAQLFEEIPELIRPSGNAYTTRRFSACLRDMDYYLRYASYALIAADNNVLDERVLQGLRETYNSLGVPIGPTVRGIQIMKEMIEAMAEDSSLNSTDFIASPFDHMTRELSELSV</sequence>
<comment type="function">
    <text evidence="1 2">A variant beta-allophycocyanin (AP) which forms a complex with ApcE, a phycobilisome terminal emitter that influences energy transfer to photosystem II.</text>
</comment>
<comment type="subunit">
    <text evidence="1">Heterodimer of ApcE and this beta chain.</text>
</comment>
<comment type="subcellular location">
    <subcellularLocation>
        <location evidence="1">Cellular thylakoid membrane</location>
        <topology evidence="1">Peripheral membrane protein</topology>
        <orientation evidence="1">Cytoplasmic side</orientation>
    </subcellularLocation>
</comment>
<comment type="PTM">
    <text evidence="1">Contains one covalently linked bilin chromophore.</text>
</comment>
<comment type="disruption phenotype">
    <text evidence="2">Increased levels of photosystem I (PSI), decreased levels of phycobilisomes (PBS) and photosystem II (PSII) per cell. Cells are unable to undergo state transitions. When combined with an ApcD deletion mutant the cells have decreased PBS, PSI and PSII, and require glucose to grow.</text>
</comment>
<comment type="similarity">
    <text evidence="3">Belongs to the phycobiliprotein family.</text>
</comment>
<name>APCF_SYNY3</name>
<organism>
    <name type="scientific">Synechocystis sp. (strain ATCC 27184 / PCC 6803 / Kazusa)</name>
    <dbReference type="NCBI Taxonomy" id="1111708"/>
    <lineage>
        <taxon>Bacteria</taxon>
        <taxon>Bacillati</taxon>
        <taxon>Cyanobacteriota</taxon>
        <taxon>Cyanophyceae</taxon>
        <taxon>Synechococcales</taxon>
        <taxon>Merismopediaceae</taxon>
        <taxon>Synechocystis</taxon>
    </lineage>
</organism>
<proteinExistence type="evidence at protein level"/>
<protein>
    <recommendedName>
        <fullName>Allophycocyanin subunit beta-18</fullName>
        <shortName>Allophycocyanin subunit B18</shortName>
    </recommendedName>
</protein>